<dbReference type="EMBL" id="DS027698">
    <property type="protein sequence ID" value="EAW15751.1"/>
    <property type="molecule type" value="Genomic_DNA"/>
</dbReference>
<dbReference type="RefSeq" id="XP_001257648.1">
    <property type="nucleotide sequence ID" value="XM_001257647.1"/>
</dbReference>
<dbReference type="SMR" id="A1DLT0"/>
<dbReference type="STRING" id="331117.A1DLT0"/>
<dbReference type="EnsemblFungi" id="EAW15751">
    <property type="protein sequence ID" value="EAW15751"/>
    <property type="gene ID" value="NFIA_050960"/>
</dbReference>
<dbReference type="GeneID" id="4584163"/>
<dbReference type="KEGG" id="nfi:NFIA_050960"/>
<dbReference type="VEuPathDB" id="FungiDB:NFIA_050960"/>
<dbReference type="eggNOG" id="ENOG502QUUW">
    <property type="taxonomic scope" value="Eukaryota"/>
</dbReference>
<dbReference type="HOGENOM" id="CLU_032730_1_0_1"/>
<dbReference type="OMA" id="WSFTQGL"/>
<dbReference type="OrthoDB" id="5376138at2759"/>
<dbReference type="Proteomes" id="UP000006702">
    <property type="component" value="Unassembled WGS sequence"/>
</dbReference>
<dbReference type="GO" id="GO:0005789">
    <property type="term" value="C:endoplasmic reticulum membrane"/>
    <property type="evidence" value="ECO:0007669"/>
    <property type="project" value="UniProtKB-SubCell"/>
</dbReference>
<dbReference type="GO" id="GO:0032865">
    <property type="term" value="C:ERMES complex"/>
    <property type="evidence" value="ECO:0007669"/>
    <property type="project" value="UniProtKB-UniRule"/>
</dbReference>
<dbReference type="GO" id="GO:0008289">
    <property type="term" value="F:lipid binding"/>
    <property type="evidence" value="ECO:0007669"/>
    <property type="project" value="UniProtKB-KW"/>
</dbReference>
<dbReference type="GO" id="GO:0006869">
    <property type="term" value="P:lipid transport"/>
    <property type="evidence" value="ECO:0007669"/>
    <property type="project" value="UniProtKB-KW"/>
</dbReference>
<dbReference type="GO" id="GO:0000002">
    <property type="term" value="P:mitochondrial genome maintenance"/>
    <property type="evidence" value="ECO:0007669"/>
    <property type="project" value="UniProtKB-UniRule"/>
</dbReference>
<dbReference type="GO" id="GO:0045040">
    <property type="term" value="P:protein insertion into mitochondrial outer membrane"/>
    <property type="evidence" value="ECO:0007669"/>
    <property type="project" value="UniProtKB-UniRule"/>
</dbReference>
<dbReference type="CDD" id="cd21671">
    <property type="entry name" value="SMP_Mmm1"/>
    <property type="match status" value="1"/>
</dbReference>
<dbReference type="HAMAP" id="MF_03103">
    <property type="entry name" value="Mmm1"/>
    <property type="match status" value="1"/>
</dbReference>
<dbReference type="InterPro" id="IPR027537">
    <property type="entry name" value="Mmm1"/>
</dbReference>
<dbReference type="InterPro" id="IPR019411">
    <property type="entry name" value="MMM1_dom"/>
</dbReference>
<dbReference type="InterPro" id="IPR031468">
    <property type="entry name" value="SMP_LBD"/>
</dbReference>
<dbReference type="PANTHER" id="PTHR13466">
    <property type="entry name" value="TEX2 PROTEIN-RELATED"/>
    <property type="match status" value="1"/>
</dbReference>
<dbReference type="Pfam" id="PF10296">
    <property type="entry name" value="MMM1"/>
    <property type="match status" value="1"/>
</dbReference>
<dbReference type="PROSITE" id="PS51847">
    <property type="entry name" value="SMP"/>
    <property type="match status" value="1"/>
</dbReference>
<comment type="function">
    <text evidence="1">Component of the ERMES/MDM complex, which serves as a molecular tether to connect the endoplasmic reticulum (ER) and mitochondria. Components of this complex are involved in the control of mitochondrial shape and protein biogenesis, and function in nonvesicular lipid trafficking between the ER and mitochondria. The mdm12-mmm1 subcomplex functions in the major beta-barrel assembly pathway that is responsible for biogenesis of all outer membrane beta-barrel proteins, and acts in a late step after the SAM complex. The mdm10-mdm12-mmm1 subcomplex further acts in the TOM40-specific pathway after the action of the mdm12-mmm1 complex. Essential for establishing and maintaining the structure of mitochondria and maintenance of mtDNA nucleoids.</text>
</comment>
<comment type="subunit">
    <text evidence="1">Homodimer. Component of the ER-mitochondria encounter structure (ERMES) or MDM complex, composed of mmm1, mdm10, mdm12 and mdm34. A mmm1 homodimer associates with one molecule of mdm12 on each side in a pairwise head-to-tail manner, and the SMP-LTD domains of mmm1 and mdm12 generate a continuous hydrophobic tunnel for phospholipid trafficking.</text>
</comment>
<comment type="subcellular location">
    <subcellularLocation>
        <location evidence="1">Endoplasmic reticulum membrane</location>
        <topology evidence="1">Single-pass type I membrane protein</topology>
    </subcellularLocation>
    <text evidence="1">The ERMES/MDM complex localizes to a few discrete foci (around 10 per single cell), that represent mitochondria-endoplasmic reticulum junctions. These foci are often found next to mtDNA nucleoids.</text>
</comment>
<comment type="domain">
    <text evidence="1">The SMP-LTD domain is a barrel-like domain that can bind various types of glycerophospholipids in its interior and mediate their transfer between two adjacent bilayers.</text>
</comment>
<comment type="similarity">
    <text evidence="1">Belongs to the MMM1 family.</text>
</comment>
<sequence length="496" mass="53680">MSSQLNDPTPIPAQSSLSFTQGFLLGQLSVVLLIAAFIKFFIFGEAPPPPSRGLSHRSATHRRSNSIYSSTQHDGNTRTLREKPSNSNVLRPVPSSATNTRSILRKTYYTAIPTNPSSKHGRHRIHHSSHQPESLDWFNVLIAQTIAQYRQTAYLLKDSPTSSILSSLTAALNNPEKKPSFIDKITVTDISLGEEFPIFSNCRIIAVDDPNSDGGRLQALMDVDLSDDNLSIAIETQLLLNYPKPCSAILPVALSISVVRFSGTLCISLVPASTPPLDTPSHSPSPPTAQTTTTGRSKREDQTGGSHSRAGGSSEEPSGENPPKTSPKSNVAFSFLPDYRLDLSVRSLIGSRSRLQDVPKVAQLVEARVHAWFEERVVEPRVQVVGLPDLWPRMGRTGVRTGDDSETGSNAPRSSTAADASGPAHHEDSSREPEVLRFGSLLGTRPPFDLASRTSSFNVETGDLRSRSMTREESSGNLSDQFHMPGSLPGGGVTTT</sequence>
<gene>
    <name evidence="1" type="primary">mmm1</name>
    <name type="ORF">NFIA_050960</name>
</gene>
<proteinExistence type="inferred from homology"/>
<organism>
    <name type="scientific">Neosartorya fischeri (strain ATCC 1020 / DSM 3700 / CBS 544.65 / FGSC A1164 / JCM 1740 / NRRL 181 / WB 181)</name>
    <name type="common">Aspergillus fischerianus</name>
    <dbReference type="NCBI Taxonomy" id="331117"/>
    <lineage>
        <taxon>Eukaryota</taxon>
        <taxon>Fungi</taxon>
        <taxon>Dikarya</taxon>
        <taxon>Ascomycota</taxon>
        <taxon>Pezizomycotina</taxon>
        <taxon>Eurotiomycetes</taxon>
        <taxon>Eurotiomycetidae</taxon>
        <taxon>Eurotiales</taxon>
        <taxon>Aspergillaceae</taxon>
        <taxon>Aspergillus</taxon>
        <taxon>Aspergillus subgen. Fumigati</taxon>
    </lineage>
</organism>
<name>MMM1_NEOFI</name>
<keyword id="KW-0256">Endoplasmic reticulum</keyword>
<keyword id="KW-0445">Lipid transport</keyword>
<keyword id="KW-0446">Lipid-binding</keyword>
<keyword id="KW-0472">Membrane</keyword>
<keyword id="KW-1185">Reference proteome</keyword>
<keyword id="KW-0812">Transmembrane</keyword>
<keyword id="KW-1133">Transmembrane helix</keyword>
<keyword id="KW-0813">Transport</keyword>
<reference key="1">
    <citation type="journal article" date="2008" name="PLoS Genet.">
        <title>Genomic islands in the pathogenic filamentous fungus Aspergillus fumigatus.</title>
        <authorList>
            <person name="Fedorova N.D."/>
            <person name="Khaldi N."/>
            <person name="Joardar V.S."/>
            <person name="Maiti R."/>
            <person name="Amedeo P."/>
            <person name="Anderson M.J."/>
            <person name="Crabtree J."/>
            <person name="Silva J.C."/>
            <person name="Badger J.H."/>
            <person name="Albarraq A."/>
            <person name="Angiuoli S."/>
            <person name="Bussey H."/>
            <person name="Bowyer P."/>
            <person name="Cotty P.J."/>
            <person name="Dyer P.S."/>
            <person name="Egan A."/>
            <person name="Galens K."/>
            <person name="Fraser-Liggett C.M."/>
            <person name="Haas B.J."/>
            <person name="Inman J.M."/>
            <person name="Kent R."/>
            <person name="Lemieux S."/>
            <person name="Malavazi I."/>
            <person name="Orvis J."/>
            <person name="Roemer T."/>
            <person name="Ronning C.M."/>
            <person name="Sundaram J.P."/>
            <person name="Sutton G."/>
            <person name="Turner G."/>
            <person name="Venter J.C."/>
            <person name="White O.R."/>
            <person name="Whitty B.R."/>
            <person name="Youngman P."/>
            <person name="Wolfe K.H."/>
            <person name="Goldman G.H."/>
            <person name="Wortman J.R."/>
            <person name="Jiang B."/>
            <person name="Denning D.W."/>
            <person name="Nierman W.C."/>
        </authorList>
    </citation>
    <scope>NUCLEOTIDE SEQUENCE [LARGE SCALE GENOMIC DNA]</scope>
    <source>
        <strain>ATCC 1020 / DSM 3700 / CBS 544.65 / FGSC A1164 / JCM 1740 / NRRL 181 / WB 181</strain>
    </source>
</reference>
<evidence type="ECO:0000255" key="1">
    <source>
        <dbReference type="HAMAP-Rule" id="MF_03103"/>
    </source>
</evidence>
<evidence type="ECO:0000256" key="2">
    <source>
        <dbReference type="SAM" id="MobiDB-lite"/>
    </source>
</evidence>
<accession>A1DLT0</accession>
<protein>
    <recommendedName>
        <fullName evidence="1">Maintenance of mitochondrial morphology protein 1</fullName>
    </recommendedName>
</protein>
<feature type="chain" id="PRO_0000384238" description="Maintenance of mitochondrial morphology protein 1">
    <location>
        <begin position="1"/>
        <end position="496"/>
    </location>
</feature>
<feature type="topological domain" description="Lumenal" evidence="1">
    <location>
        <begin position="1"/>
        <end position="22"/>
    </location>
</feature>
<feature type="transmembrane region" description="Helical" evidence="1">
    <location>
        <begin position="23"/>
        <end position="43"/>
    </location>
</feature>
<feature type="topological domain" description="Cytoplasmic" evidence="1">
    <location>
        <begin position="44"/>
        <end position="496"/>
    </location>
</feature>
<feature type="domain" description="SMP-LTD" evidence="1">
    <location>
        <begin position="131"/>
        <end position="388"/>
    </location>
</feature>
<feature type="region of interest" description="Disordered" evidence="2">
    <location>
        <begin position="50"/>
        <end position="96"/>
    </location>
</feature>
<feature type="region of interest" description="Disordered" evidence="2">
    <location>
        <begin position="276"/>
        <end position="331"/>
    </location>
</feature>
<feature type="region of interest" description="Disordered" evidence="2">
    <location>
        <begin position="395"/>
        <end position="433"/>
    </location>
</feature>
<feature type="region of interest" description="Disordered" evidence="2">
    <location>
        <begin position="449"/>
        <end position="496"/>
    </location>
</feature>
<feature type="compositionally biased region" description="Basic residues" evidence="2">
    <location>
        <begin position="54"/>
        <end position="64"/>
    </location>
</feature>
<feature type="compositionally biased region" description="Polar residues" evidence="2">
    <location>
        <begin position="65"/>
        <end position="74"/>
    </location>
</feature>
<feature type="compositionally biased region" description="Basic and acidic residues" evidence="2">
    <location>
        <begin position="75"/>
        <end position="84"/>
    </location>
</feature>
<feature type="compositionally biased region" description="Polar residues" evidence="2">
    <location>
        <begin position="85"/>
        <end position="96"/>
    </location>
</feature>
<feature type="compositionally biased region" description="Pro residues" evidence="2">
    <location>
        <begin position="276"/>
        <end position="287"/>
    </location>
</feature>
<feature type="compositionally biased region" description="Polar residues" evidence="2">
    <location>
        <begin position="407"/>
        <end position="418"/>
    </location>
</feature>
<feature type="compositionally biased region" description="Basic and acidic residues" evidence="2">
    <location>
        <begin position="424"/>
        <end position="433"/>
    </location>
</feature>
<feature type="compositionally biased region" description="Basic and acidic residues" evidence="2">
    <location>
        <begin position="462"/>
        <end position="474"/>
    </location>
</feature>